<reference key="1">
    <citation type="journal article" date="2006" name="Plant Cell Rep.">
        <title>A comprehensive expression analysis of the WRKY gene superfamily in rice plants during defense response.</title>
        <authorList>
            <person name="Ryu H.-S."/>
            <person name="Han M."/>
            <person name="Lee S.-K."/>
            <person name="Cho J.-I."/>
            <person name="Ryoo N."/>
            <person name="Heu S."/>
            <person name="Lee Y.-H."/>
            <person name="Bhoo S.H."/>
            <person name="Wang G.-L."/>
            <person name="Hahn T.-R."/>
            <person name="Jeon J.-S."/>
        </authorList>
    </citation>
    <scope>NUCLEOTIDE SEQUENCE [MRNA] (ISOFORM 2)</scope>
    <scope>INDUCTION BY SALICYLIC ACID; MAGNAPORTHE GRISEA AND XANTHOMONAS ORYZAE</scope>
</reference>
<reference key="2">
    <citation type="journal article" date="2005" name="Nature">
        <title>The map-based sequence of the rice genome.</title>
        <authorList>
            <consortium name="International rice genome sequencing project (IRGSP)"/>
        </authorList>
    </citation>
    <scope>NUCLEOTIDE SEQUENCE [LARGE SCALE GENOMIC DNA]</scope>
    <source>
        <strain>cv. Nipponbare</strain>
    </source>
</reference>
<reference key="3">
    <citation type="journal article" date="2008" name="Nucleic Acids Res.">
        <title>The rice annotation project database (RAP-DB): 2008 update.</title>
        <authorList>
            <consortium name="The rice annotation project (RAP)"/>
        </authorList>
    </citation>
    <scope>GENOME REANNOTATION</scope>
    <source>
        <strain>cv. Nipponbare</strain>
    </source>
</reference>
<reference key="4">
    <citation type="journal article" date="2013" name="Rice">
        <title>Improvement of the Oryza sativa Nipponbare reference genome using next generation sequence and optical map data.</title>
        <authorList>
            <person name="Kawahara Y."/>
            <person name="de la Bastide M."/>
            <person name="Hamilton J.P."/>
            <person name="Kanamori H."/>
            <person name="McCombie W.R."/>
            <person name="Ouyang S."/>
            <person name="Schwartz D.C."/>
            <person name="Tanaka T."/>
            <person name="Wu J."/>
            <person name="Zhou S."/>
            <person name="Childs K.L."/>
            <person name="Davidson R.M."/>
            <person name="Lin H."/>
            <person name="Quesada-Ocampo L."/>
            <person name="Vaillancourt B."/>
            <person name="Sakai H."/>
            <person name="Lee S.S."/>
            <person name="Kim J."/>
            <person name="Numa H."/>
            <person name="Itoh T."/>
            <person name="Buell C.R."/>
            <person name="Matsumoto T."/>
        </authorList>
    </citation>
    <scope>GENOME REANNOTATION</scope>
    <source>
        <strain>cv. Nipponbare</strain>
    </source>
</reference>
<reference key="5">
    <citation type="journal article" date="2005" name="PLoS Biol.">
        <title>The genomes of Oryza sativa: a history of duplications.</title>
        <authorList>
            <person name="Yu J."/>
            <person name="Wang J."/>
            <person name="Lin W."/>
            <person name="Li S."/>
            <person name="Li H."/>
            <person name="Zhou J."/>
            <person name="Ni P."/>
            <person name="Dong W."/>
            <person name="Hu S."/>
            <person name="Zeng C."/>
            <person name="Zhang J."/>
            <person name="Zhang Y."/>
            <person name="Li R."/>
            <person name="Xu Z."/>
            <person name="Li S."/>
            <person name="Li X."/>
            <person name="Zheng H."/>
            <person name="Cong L."/>
            <person name="Lin L."/>
            <person name="Yin J."/>
            <person name="Geng J."/>
            <person name="Li G."/>
            <person name="Shi J."/>
            <person name="Liu J."/>
            <person name="Lv H."/>
            <person name="Li J."/>
            <person name="Wang J."/>
            <person name="Deng Y."/>
            <person name="Ran L."/>
            <person name="Shi X."/>
            <person name="Wang X."/>
            <person name="Wu Q."/>
            <person name="Li C."/>
            <person name="Ren X."/>
            <person name="Wang J."/>
            <person name="Wang X."/>
            <person name="Li D."/>
            <person name="Liu D."/>
            <person name="Zhang X."/>
            <person name="Ji Z."/>
            <person name="Zhao W."/>
            <person name="Sun Y."/>
            <person name="Zhang Z."/>
            <person name="Bao J."/>
            <person name="Han Y."/>
            <person name="Dong L."/>
            <person name="Ji J."/>
            <person name="Chen P."/>
            <person name="Wu S."/>
            <person name="Liu J."/>
            <person name="Xiao Y."/>
            <person name="Bu D."/>
            <person name="Tan J."/>
            <person name="Yang L."/>
            <person name="Ye C."/>
            <person name="Zhang J."/>
            <person name="Xu J."/>
            <person name="Zhou Y."/>
            <person name="Yu Y."/>
            <person name="Zhang B."/>
            <person name="Zhuang S."/>
            <person name="Wei H."/>
            <person name="Liu B."/>
            <person name="Lei M."/>
            <person name="Yu H."/>
            <person name="Li Y."/>
            <person name="Xu H."/>
            <person name="Wei S."/>
            <person name="He X."/>
            <person name="Fang L."/>
            <person name="Zhang Z."/>
            <person name="Zhang Y."/>
            <person name="Huang X."/>
            <person name="Su Z."/>
            <person name="Tong W."/>
            <person name="Li J."/>
            <person name="Tong Z."/>
            <person name="Li S."/>
            <person name="Ye J."/>
            <person name="Wang L."/>
            <person name="Fang L."/>
            <person name="Lei T."/>
            <person name="Chen C.-S."/>
            <person name="Chen H.-C."/>
            <person name="Xu Z."/>
            <person name="Li H."/>
            <person name="Huang H."/>
            <person name="Zhang F."/>
            <person name="Xu H."/>
            <person name="Li N."/>
            <person name="Zhao C."/>
            <person name="Li S."/>
            <person name="Dong L."/>
            <person name="Huang Y."/>
            <person name="Li L."/>
            <person name="Xi Y."/>
            <person name="Qi Q."/>
            <person name="Li W."/>
            <person name="Zhang B."/>
            <person name="Hu W."/>
            <person name="Zhang Y."/>
            <person name="Tian X."/>
            <person name="Jiao Y."/>
            <person name="Liang X."/>
            <person name="Jin J."/>
            <person name="Gao L."/>
            <person name="Zheng W."/>
            <person name="Hao B."/>
            <person name="Liu S.-M."/>
            <person name="Wang W."/>
            <person name="Yuan L."/>
            <person name="Cao M."/>
            <person name="McDermott J."/>
            <person name="Samudrala R."/>
            <person name="Wang J."/>
            <person name="Wong G.K.-S."/>
            <person name="Yang H."/>
        </authorList>
    </citation>
    <scope>NUCLEOTIDE SEQUENCE [LARGE SCALE GENOMIC DNA]</scope>
    <source>
        <strain>cv. Nipponbare</strain>
    </source>
</reference>
<reference key="6">
    <citation type="journal article" date="2003" name="Science">
        <title>Collection, mapping, and annotation of over 28,000 cDNA clones from japonica rice.</title>
        <authorList>
            <consortium name="The rice full-length cDNA consortium"/>
        </authorList>
    </citation>
    <scope>NUCLEOTIDE SEQUENCE [LARGE SCALE MRNA] (ISOFORM 1)</scope>
    <source>
        <strain>cv. Nipponbare</strain>
    </source>
</reference>
<reference key="7">
    <citation type="journal article" date="2005" name="BMC Evol. Biol.">
        <title>The WRKY transcription factor superfamily: its origin in eukaryotes and expansion in plants.</title>
        <authorList>
            <person name="Zhang Y."/>
            <person name="Wang L."/>
        </authorList>
    </citation>
    <scope>GENE FAMILY</scope>
</reference>
<reference key="8">
    <citation type="journal article" date="2005" name="DNA Res.">
        <title>The WRKY family of transcription factors in rice and Arabidopsis and their origins.</title>
        <authorList>
            <person name="Wu K.-L."/>
            <person name="Guo Z.-J."/>
            <person name="Wang H.-H."/>
            <person name="Li J."/>
        </authorList>
    </citation>
    <scope>GENE FAMILY</scope>
</reference>
<reference key="9">
    <citation type="journal article" date="2005" name="Plant Physiol.">
        <title>Annotations and functional analyses of the rice WRKY gene superfamily reveal positive and negative regulators of abscisic acid signaling in aleurone cells.</title>
        <authorList>
            <person name="Xie Z."/>
            <person name="Zhang Z.-L."/>
            <person name="Zou X."/>
            <person name="Huang J."/>
            <person name="Ruas P."/>
            <person name="Thompson D."/>
            <person name="Shen Q.J."/>
        </authorList>
    </citation>
    <scope>GENE FAMILY</scope>
    <scope>NOMENCLATURE</scope>
</reference>
<reference key="10">
    <citation type="journal article" date="2007" name="Plant Cell">
        <title>Rice WRKY45 plays a crucial role in benzothiadiazole-inducible blast resistance.</title>
        <authorList>
            <person name="Shimono M."/>
            <person name="Sugano S."/>
            <person name="Nakayama A."/>
            <person name="Jiang C.-J."/>
            <person name="Ono K."/>
            <person name="Toki S."/>
            <person name="Takatsuji H."/>
        </authorList>
    </citation>
    <scope>INDUCTION BY BENZOTHIADIAZOLE AND SALICYLIC ACID</scope>
</reference>
<reference key="11">
    <citation type="journal article" date="2008" name="Mol. Plant">
        <title>OsWRKY62 is a negative regulator of basal and Xa21-mediated defense against Xanthomonas oryzae pv. oryzae in rice.</title>
        <authorList>
            <person name="Peng Y."/>
            <person name="Bartley L.E."/>
            <person name="Chen X."/>
            <person name="Dardick C."/>
            <person name="Chern M."/>
            <person name="Ruan R."/>
            <person name="Canlas P.E."/>
            <person name="Ronald P.C."/>
        </authorList>
    </citation>
    <scope>ALTERNATIVE SPLICING (ISOFORMS 1 AND 2)</scope>
    <scope>FUNCTION</scope>
    <scope>SUBCELLULAR LOCATION</scope>
    <scope>INTERACTION WITH XA21</scope>
</reference>
<reference key="12">
    <citation type="journal article" date="2010" name="Rice">
        <title>OsWRKY IIa transcription factors modulate rice innate immunity.</title>
        <authorList>
            <person name="Peng Y."/>
            <person name="Bartley L.E."/>
            <person name="Canlas P."/>
            <person name="Ronald P.C."/>
        </authorList>
    </citation>
    <scope>FUNCTION</scope>
</reference>
<reference key="13">
    <citation type="journal article" date="2012" name="Nat. Commun.">
        <title>Cleavage and nuclear localization of the rice XA21 immune receptor.</title>
        <authorList>
            <person name="Park C.J."/>
            <person name="Ronald P.C."/>
        </authorList>
    </citation>
    <scope>INTERACTION WITH XA21</scope>
    <scope>SUBCELLULAR LOCATION</scope>
    <scope>INDUCTION BY XA21</scope>
</reference>
<reference key="14">
    <citation type="journal article" date="2013" name="BMC Plant Biol.">
        <title>Genome-wide identification of WRKY45-regulated genes that mediate benzothiadiazole-induced defense responses in rice.</title>
        <authorList>
            <person name="Nakayama A."/>
            <person name="Fukushima S."/>
            <person name="Goto S."/>
            <person name="Matsushita A."/>
            <person name="Shimono M."/>
            <person name="Sugano S."/>
            <person name="Jiang C.J."/>
            <person name="Akagi A."/>
            <person name="Yamazaki M."/>
            <person name="Inoue H."/>
            <person name="Takatsuji H."/>
        </authorList>
    </citation>
    <scope>INDUCTION BY WRKY45; BENZOTHIADIAZOLE AND MAGNAPORTHE GRISEA</scope>
</reference>
<reference key="15">
    <citation type="journal article" date="2013" name="Plant Mol. Biol.">
        <title>OsWRKY28, a PAMP-responsive transrepressor, negatively regulates innate immune responses in rice against rice blast fungus.</title>
        <authorList>
            <person name="Chujo T."/>
            <person name="Miyamoto K."/>
            <person name="Shimogawa T."/>
            <person name="Shimizu T."/>
            <person name="Otake Y."/>
            <person name="Yokotani N."/>
            <person name="Nishizawa Y."/>
            <person name="Shibuya N."/>
            <person name="Nojiri H."/>
            <person name="Yamane H."/>
            <person name="Minami E."/>
            <person name="Okada K."/>
        </authorList>
    </citation>
    <scope>INDUCTION BY BIOTIC ELICITORS</scope>
    <source>
        <strain>cv. Nipponbare</strain>
    </source>
</reference>
<proteinExistence type="evidence at protein level"/>
<name>WRK62_ORYSJ</name>
<feature type="chain" id="PRO_0000436956" description="WRKY transcription factor WRKY62">
    <location>
        <begin position="1"/>
        <end position="318"/>
    </location>
</feature>
<feature type="DNA-binding region" description="WRKY" evidence="3">
    <location>
        <begin position="138"/>
        <end position="204"/>
    </location>
</feature>
<feature type="region of interest" description="Disordered" evidence="5">
    <location>
        <begin position="1"/>
        <end position="27"/>
    </location>
</feature>
<feature type="region of interest" description="Disordered" evidence="5">
    <location>
        <begin position="65"/>
        <end position="86"/>
    </location>
</feature>
<feature type="region of interest" description="Disordered" evidence="5">
    <location>
        <begin position="100"/>
        <end position="136"/>
    </location>
</feature>
<feature type="coiled-coil region" evidence="2">
    <location>
        <begin position="29"/>
        <end position="49"/>
    </location>
</feature>
<feature type="compositionally biased region" description="Low complexity" evidence="5">
    <location>
        <begin position="7"/>
        <end position="19"/>
    </location>
</feature>
<feature type="compositionally biased region" description="Low complexity" evidence="5">
    <location>
        <begin position="76"/>
        <end position="86"/>
    </location>
</feature>
<feature type="binding site" evidence="4">
    <location>
        <begin position="259"/>
        <end position="266"/>
    </location>
    <ligand>
        <name>ATP</name>
        <dbReference type="ChEBI" id="CHEBI:30616"/>
    </ligand>
</feature>
<feature type="splice variant" id="VSP_058456" description="In isoform 2.">
    <location>
        <begin position="1"/>
        <end position="39"/>
    </location>
</feature>
<dbReference type="EMBL" id="DQ298182">
    <property type="protein sequence ID" value="ABC02810.1"/>
    <property type="molecule type" value="mRNA"/>
</dbReference>
<dbReference type="EMBL" id="AP005429">
    <property type="protein sequence ID" value="BAD28643.1"/>
    <property type="molecule type" value="Genomic_DNA"/>
</dbReference>
<dbReference type="EMBL" id="AP005784">
    <property type="protein sequence ID" value="BAD29280.1"/>
    <property type="molecule type" value="Genomic_DNA"/>
</dbReference>
<dbReference type="EMBL" id="AP008215">
    <property type="protein sequence ID" value="BAF25099.1"/>
    <property type="molecule type" value="Genomic_DNA"/>
</dbReference>
<dbReference type="EMBL" id="AP014965">
    <property type="protein sequence ID" value="BAT08100.1"/>
    <property type="molecule type" value="Genomic_DNA"/>
</dbReference>
<dbReference type="EMBL" id="CM000146">
    <property type="protein sequence ID" value="EEE69711.1"/>
    <property type="molecule type" value="Genomic_DNA"/>
</dbReference>
<dbReference type="EMBL" id="AK067834">
    <property type="protein sequence ID" value="BAG90631.1"/>
    <property type="molecule type" value="mRNA"/>
</dbReference>
<dbReference type="RefSeq" id="XP_015610755.1">
    <property type="nucleotide sequence ID" value="XM_015755269.1"/>
</dbReference>
<dbReference type="SMR" id="Q6EPZ0"/>
<dbReference type="FunCoup" id="Q6EPZ0">
    <property type="interactions" value="484"/>
</dbReference>
<dbReference type="STRING" id="39947.Q6EPZ0"/>
<dbReference type="PaxDb" id="39947-Q6EPZ0"/>
<dbReference type="EnsemblPlants" id="Os09t0417800-01">
    <molecule id="Q6EPZ0-1"/>
    <property type="protein sequence ID" value="Os09t0417800-01"/>
    <property type="gene ID" value="Os09g0417800"/>
</dbReference>
<dbReference type="Gramene" id="Os09t0417800-01">
    <molecule id="Q6EPZ0-1"/>
    <property type="protein sequence ID" value="Os09t0417800-01"/>
    <property type="gene ID" value="Os09g0417800"/>
</dbReference>
<dbReference type="KEGG" id="dosa:Os09g0417800"/>
<dbReference type="eggNOG" id="ENOG502QR7M">
    <property type="taxonomic scope" value="Eukaryota"/>
</dbReference>
<dbReference type="HOGENOM" id="CLU_047067_0_1_1"/>
<dbReference type="InParanoid" id="Q6EPZ0"/>
<dbReference type="OMA" id="MWITIIL"/>
<dbReference type="OrthoDB" id="1879341at2759"/>
<dbReference type="PlantReactome" id="R-OSA-6788019">
    <property type="pathway name" value="Salicylic acid signaling"/>
</dbReference>
<dbReference type="Proteomes" id="UP000000763">
    <property type="component" value="Chromosome 9"/>
</dbReference>
<dbReference type="Proteomes" id="UP000007752">
    <property type="component" value="Chromosome 9"/>
</dbReference>
<dbReference type="Proteomes" id="UP000059680">
    <property type="component" value="Chromosome 9"/>
</dbReference>
<dbReference type="GO" id="GO:0005634">
    <property type="term" value="C:nucleus"/>
    <property type="evidence" value="ECO:0000314"/>
    <property type="project" value="UniProtKB"/>
</dbReference>
<dbReference type="GO" id="GO:0005524">
    <property type="term" value="F:ATP binding"/>
    <property type="evidence" value="ECO:0007669"/>
    <property type="project" value="UniProtKB-KW"/>
</dbReference>
<dbReference type="GO" id="GO:0003700">
    <property type="term" value="F:DNA-binding transcription factor activity"/>
    <property type="evidence" value="ECO:0007669"/>
    <property type="project" value="InterPro"/>
</dbReference>
<dbReference type="GO" id="GO:0043565">
    <property type="term" value="F:sequence-specific DNA binding"/>
    <property type="evidence" value="ECO:0007669"/>
    <property type="project" value="InterPro"/>
</dbReference>
<dbReference type="GO" id="GO:0006952">
    <property type="term" value="P:defense response"/>
    <property type="evidence" value="ECO:0007669"/>
    <property type="project" value="UniProtKB-KW"/>
</dbReference>
<dbReference type="GO" id="GO:1900425">
    <property type="term" value="P:negative regulation of defense response to bacterium"/>
    <property type="evidence" value="ECO:0000315"/>
    <property type="project" value="UniProtKB"/>
</dbReference>
<dbReference type="GO" id="GO:0009617">
    <property type="term" value="P:response to bacterium"/>
    <property type="evidence" value="ECO:0000270"/>
    <property type="project" value="UniProtKB"/>
</dbReference>
<dbReference type="GO" id="GO:0010200">
    <property type="term" value="P:response to chitin"/>
    <property type="evidence" value="ECO:0000270"/>
    <property type="project" value="UniProtKB"/>
</dbReference>
<dbReference type="GO" id="GO:0009620">
    <property type="term" value="P:response to fungus"/>
    <property type="evidence" value="ECO:0000270"/>
    <property type="project" value="UniProtKB"/>
</dbReference>
<dbReference type="GO" id="GO:0009751">
    <property type="term" value="P:response to salicylic acid"/>
    <property type="evidence" value="ECO:0000270"/>
    <property type="project" value="UniProtKB"/>
</dbReference>
<dbReference type="FunFam" id="2.20.25.80:FF:000008">
    <property type="entry name" value="WRKY transcription factor 40"/>
    <property type="match status" value="1"/>
</dbReference>
<dbReference type="Gene3D" id="2.20.25.80">
    <property type="entry name" value="WRKY domain"/>
    <property type="match status" value="1"/>
</dbReference>
<dbReference type="InterPro" id="IPR003657">
    <property type="entry name" value="WRKY_dom"/>
</dbReference>
<dbReference type="InterPro" id="IPR036576">
    <property type="entry name" value="WRKY_dom_sf"/>
</dbReference>
<dbReference type="InterPro" id="IPR044810">
    <property type="entry name" value="WRKY_plant"/>
</dbReference>
<dbReference type="PANTHER" id="PTHR31429">
    <property type="entry name" value="WRKY TRANSCRIPTION FACTOR 36-RELATED"/>
    <property type="match status" value="1"/>
</dbReference>
<dbReference type="PANTHER" id="PTHR31429:SF84">
    <property type="entry name" value="WRKY TRANSCRIPTION FACTOR WRKY62"/>
    <property type="match status" value="1"/>
</dbReference>
<dbReference type="Pfam" id="PF03106">
    <property type="entry name" value="WRKY"/>
    <property type="match status" value="1"/>
</dbReference>
<dbReference type="SMART" id="SM00774">
    <property type="entry name" value="WRKY"/>
    <property type="match status" value="1"/>
</dbReference>
<dbReference type="SUPFAM" id="SSF118290">
    <property type="entry name" value="WRKY DNA-binding domain"/>
    <property type="match status" value="1"/>
</dbReference>
<dbReference type="PROSITE" id="PS50811">
    <property type="entry name" value="WRKY"/>
    <property type="match status" value="1"/>
</dbReference>
<sequence length="318" mass="33515">MDDDGDGSSSPTDDSAAAGLLPLFSRSPAEDLEEKLRRAMEENARLTRALDAILAGHHAHQRALLAPSLSPPPPSATARAPSVSTSCAAREDAAPAVAAAAASTACPSRQQPPTAEPRPKVRTVRVRADAADATDANSMAETVKDGYQWRKYGQKVTRDNPYPRAYFRCAFAPSCPVKKKLQRCAEDRSMLVATYEGEHNHALSTQTTEFVASGCTTSQHAGGSSSSPLPCSISINSSGRTITLDLTNQAGSGSIASCGVEAAAVSGELVTVLSPELRRHLVEEVVQVLKNDAEFVEAVTNAVAARVVDQIPHIPVHL</sequence>
<comment type="function">
    <text evidence="1 8 9">Transcription repressor. Interacts specifically with the W box (5'-(T)TGAC[CT]-3'), a frequently occurring elicitor-responsive cis-acting element. Regulates, probably indirectly, the activation of defense-related genes during defense response (By similarity). Negatively regulates basal innate immunity and XA21-mediated defense against X.oryzae pv. oryzae (Xoo) (PubMed:19825552, PubMed:21961049).</text>
</comment>
<comment type="subunit">
    <text evidence="8 10">Interacts with XA21 in the nucleus.</text>
</comment>
<comment type="subcellular location">
    <subcellularLocation>
        <location evidence="3 8 10">Nucleus</location>
    </subcellularLocation>
</comment>
<comment type="alternative products">
    <event type="alternative splicing"/>
    <isoform>
        <id>Q6EPZ0-1</id>
        <name>1</name>
        <name evidence="14">OsWRKY62.1</name>
        <sequence type="displayed"/>
    </isoform>
    <isoform>
        <id>Q6EPZ0-2</id>
        <name>2</name>
        <name evidence="14">OsWRKY62.2</name>
        <sequence type="described" ref="VSP_058456"/>
    </isoform>
</comment>
<comment type="induction">
    <text evidence="6 7 11 12 14">Might be activated by XA21 in the nucleus upon pathogen infection (PubMed:19825552). Induced by biotic elicitors (e.g. fungal chitin oligosaccharide) (PubMed:23462973). Induced by pathogen infection (e.g. M.grisea and X.oryzae pv. oryzae (Xoo)) (PubMed:16528562, PubMed:24093634). Accumulates after treatment with benzothiadiazole (BTH) and salicylic acid (SA) (PubMed:16528562, PubMed:17601827, PubMed:24093634). Transactivated by WRKY45 (PubMed:24093634).</text>
</comment>
<comment type="domain">
    <text evidence="1">The WRKY domain is required to bind DNA.</text>
</comment>
<comment type="similarity">
    <text evidence="15">Belongs to the WRKY group II-a family.</text>
</comment>
<protein>
    <recommendedName>
        <fullName evidence="13">WRKY transcription factor WRKY62</fullName>
        <shortName evidence="13">OsWRKY62</shortName>
    </recommendedName>
    <alternativeName>
        <fullName evidence="15">XA21-binding protein 10</fullName>
    </alternativeName>
</protein>
<evidence type="ECO:0000250" key="1">
    <source>
        <dbReference type="UniProtKB" id="Q6QHD1"/>
    </source>
</evidence>
<evidence type="ECO:0000255" key="2"/>
<evidence type="ECO:0000255" key="3">
    <source>
        <dbReference type="PROSITE-ProRule" id="PRU00223"/>
    </source>
</evidence>
<evidence type="ECO:0000255" key="4">
    <source>
        <dbReference type="PROSITE-ProRule" id="PRU00289"/>
    </source>
</evidence>
<evidence type="ECO:0000256" key="5">
    <source>
        <dbReference type="SAM" id="MobiDB-lite"/>
    </source>
</evidence>
<evidence type="ECO:0000269" key="6">
    <source>
    </source>
</evidence>
<evidence type="ECO:0000269" key="7">
    <source>
    </source>
</evidence>
<evidence type="ECO:0000269" key="8">
    <source>
    </source>
</evidence>
<evidence type="ECO:0000269" key="9">
    <source>
    </source>
</evidence>
<evidence type="ECO:0000269" key="10">
    <source>
    </source>
</evidence>
<evidence type="ECO:0000269" key="11">
    <source>
    </source>
</evidence>
<evidence type="ECO:0000269" key="12">
    <source>
    </source>
</evidence>
<evidence type="ECO:0000303" key="13">
    <source>
    </source>
</evidence>
<evidence type="ECO:0000303" key="14">
    <source>
    </source>
</evidence>
<evidence type="ECO:0000305" key="15"/>
<evidence type="ECO:0000312" key="16">
    <source>
        <dbReference type="EMBL" id="BAD28643.1"/>
    </source>
</evidence>
<evidence type="ECO:0000312" key="17">
    <source>
        <dbReference type="EMBL" id="BAD29280.1"/>
    </source>
</evidence>
<evidence type="ECO:0000312" key="18">
    <source>
        <dbReference type="EMBL" id="BAF25099.1"/>
    </source>
</evidence>
<evidence type="ECO:0000312" key="19">
    <source>
        <dbReference type="EMBL" id="BAT08100.1"/>
    </source>
</evidence>
<evidence type="ECO:0000312" key="20">
    <source>
        <dbReference type="EMBL" id="EEE69711.1"/>
    </source>
</evidence>
<keyword id="KW-0025">Alternative splicing</keyword>
<keyword id="KW-0067">ATP-binding</keyword>
<keyword id="KW-0175">Coiled coil</keyword>
<keyword id="KW-0238">DNA-binding</keyword>
<keyword id="KW-0547">Nucleotide-binding</keyword>
<keyword id="KW-0539">Nucleus</keyword>
<keyword id="KW-0611">Plant defense</keyword>
<keyword id="KW-1185">Reference proteome</keyword>
<keyword id="KW-0804">Transcription</keyword>
<keyword id="KW-0805">Transcription regulation</keyword>
<accession>Q6EPZ0</accession>
<accession>Q20DP8</accession>
<organism>
    <name type="scientific">Oryza sativa subsp. japonica</name>
    <name type="common">Rice</name>
    <dbReference type="NCBI Taxonomy" id="39947"/>
    <lineage>
        <taxon>Eukaryota</taxon>
        <taxon>Viridiplantae</taxon>
        <taxon>Streptophyta</taxon>
        <taxon>Embryophyta</taxon>
        <taxon>Tracheophyta</taxon>
        <taxon>Spermatophyta</taxon>
        <taxon>Magnoliopsida</taxon>
        <taxon>Liliopsida</taxon>
        <taxon>Poales</taxon>
        <taxon>Poaceae</taxon>
        <taxon>BOP clade</taxon>
        <taxon>Oryzoideae</taxon>
        <taxon>Oryzeae</taxon>
        <taxon>Oryzinae</taxon>
        <taxon>Oryza</taxon>
        <taxon>Oryza sativa</taxon>
    </lineage>
</organism>
<gene>
    <name evidence="13" type="primary">WRKY62</name>
    <name evidence="15" type="synonym">XB10</name>
    <name evidence="18" type="ordered locus">Os09g0417800</name>
    <name evidence="20" type="ORF">OsJ_29379</name>
    <name evidence="19" type="ORF">OSNPB_090417800</name>
    <name evidence="17" type="ORF">P0014G10.42</name>
    <name evidence="16" type="ORF">P0701F11.1</name>
</gene>